<accession>B1VKB7</accession>
<dbReference type="EMBL" id="AP009377">
    <property type="protein sequence ID" value="BAG16628.1"/>
    <property type="molecule type" value="Genomic_DNA"/>
</dbReference>
<dbReference type="RefSeq" id="YP_001806630.1">
    <property type="nucleotide sequence ID" value="NC_010548.1"/>
</dbReference>
<dbReference type="SMR" id="B1VKB7"/>
<dbReference type="GeneID" id="6166622"/>
<dbReference type="KEGG" id="cjf:6166622"/>
<dbReference type="OrthoDB" id="415867at2759"/>
<dbReference type="GO" id="GO:0009535">
    <property type="term" value="C:chloroplast thylakoid membrane"/>
    <property type="evidence" value="ECO:0007669"/>
    <property type="project" value="UniProtKB-SubCell"/>
</dbReference>
<dbReference type="GO" id="GO:0009055">
    <property type="term" value="F:electron transfer activity"/>
    <property type="evidence" value="ECO:0007669"/>
    <property type="project" value="UniProtKB-UniRule"/>
</dbReference>
<dbReference type="GO" id="GO:0020037">
    <property type="term" value="F:heme binding"/>
    <property type="evidence" value="ECO:0007669"/>
    <property type="project" value="InterPro"/>
</dbReference>
<dbReference type="GO" id="GO:0005506">
    <property type="term" value="F:iron ion binding"/>
    <property type="evidence" value="ECO:0007669"/>
    <property type="project" value="InterPro"/>
</dbReference>
<dbReference type="GO" id="GO:0015979">
    <property type="term" value="P:photosynthesis"/>
    <property type="evidence" value="ECO:0007669"/>
    <property type="project" value="UniProtKB-UniRule"/>
</dbReference>
<dbReference type="FunFam" id="1.20.5.700:FF:000001">
    <property type="entry name" value="Cytochrome f"/>
    <property type="match status" value="1"/>
</dbReference>
<dbReference type="FunFam" id="2.40.50.100:FF:000007">
    <property type="entry name" value="Cytochrome f"/>
    <property type="match status" value="1"/>
</dbReference>
<dbReference type="FunFam" id="2.60.40.830:FF:000001">
    <property type="entry name" value="Cytochrome f"/>
    <property type="match status" value="1"/>
</dbReference>
<dbReference type="Gene3D" id="2.40.50.100">
    <property type="match status" value="1"/>
</dbReference>
<dbReference type="Gene3D" id="2.60.40.830">
    <property type="entry name" value="Cytochrome f large domain"/>
    <property type="match status" value="1"/>
</dbReference>
<dbReference type="Gene3D" id="1.20.5.700">
    <property type="entry name" value="Single helix bin"/>
    <property type="match status" value="1"/>
</dbReference>
<dbReference type="HAMAP" id="MF_00610">
    <property type="entry name" value="Cytb6_f_cytF"/>
    <property type="match status" value="1"/>
</dbReference>
<dbReference type="InterPro" id="IPR024058">
    <property type="entry name" value="Cyt-f_TM"/>
</dbReference>
<dbReference type="InterPro" id="IPR002325">
    <property type="entry name" value="Cyt_f"/>
</dbReference>
<dbReference type="InterPro" id="IPR024094">
    <property type="entry name" value="Cyt_f_lg_dom"/>
</dbReference>
<dbReference type="InterPro" id="IPR036826">
    <property type="entry name" value="Cyt_f_lg_dom_sf"/>
</dbReference>
<dbReference type="InterPro" id="IPR011054">
    <property type="entry name" value="Rudment_hybrid_motif"/>
</dbReference>
<dbReference type="PANTHER" id="PTHR33288">
    <property type="match status" value="1"/>
</dbReference>
<dbReference type="PANTHER" id="PTHR33288:SF10">
    <property type="entry name" value="CYTOCHROME F"/>
    <property type="match status" value="1"/>
</dbReference>
<dbReference type="Pfam" id="PF01333">
    <property type="entry name" value="Apocytochr_F_C"/>
    <property type="match status" value="1"/>
</dbReference>
<dbReference type="Pfam" id="PF16639">
    <property type="entry name" value="Apocytochr_F_N"/>
    <property type="match status" value="1"/>
</dbReference>
<dbReference type="PRINTS" id="PR00610">
    <property type="entry name" value="CYTOCHROMEF"/>
</dbReference>
<dbReference type="SUPFAM" id="SSF103431">
    <property type="entry name" value="Cytochrome f subunit of the cytochrome b6f complex, transmembrane anchor"/>
    <property type="match status" value="1"/>
</dbReference>
<dbReference type="SUPFAM" id="SSF49441">
    <property type="entry name" value="Cytochrome f, large domain"/>
    <property type="match status" value="1"/>
</dbReference>
<dbReference type="SUPFAM" id="SSF51246">
    <property type="entry name" value="Rudiment single hybrid motif"/>
    <property type="match status" value="1"/>
</dbReference>
<dbReference type="PROSITE" id="PS51010">
    <property type="entry name" value="CYTF"/>
    <property type="match status" value="1"/>
</dbReference>
<name>CYF_CRYJA</name>
<proteinExistence type="inferred from homology"/>
<comment type="function">
    <text evidence="2">Component of the cytochrome b6-f complex, which mediates electron transfer between photosystem II (PSII) and photosystem I (PSI), cyclic electron flow around PSI, and state transitions.</text>
</comment>
<comment type="cofactor">
    <cofactor evidence="2">
        <name>heme</name>
        <dbReference type="ChEBI" id="CHEBI:30413"/>
    </cofactor>
    <text evidence="2">Binds 1 heme group covalently.</text>
</comment>
<comment type="subunit">
    <text evidence="1">The 4 large subunits of the cytochrome b6-f complex are cytochrome b6, subunit IV (17 kDa polypeptide, petD), cytochrome f and the Rieske protein, while the 4 small subunits are PetG, PetL, PetM and PetN. The complex functions as a dimer (By similarity).</text>
</comment>
<comment type="subcellular location">
    <subcellularLocation>
        <location evidence="2">Plastid</location>
        <location evidence="2">Chloroplast thylakoid membrane</location>
        <topology evidence="2">Single-pass membrane protein</topology>
    </subcellularLocation>
</comment>
<comment type="similarity">
    <text evidence="2">Belongs to the cytochrome f family.</text>
</comment>
<geneLocation type="chloroplast"/>
<gene>
    <name evidence="2" type="primary">petA</name>
</gene>
<keyword id="KW-0150">Chloroplast</keyword>
<keyword id="KW-0249">Electron transport</keyword>
<keyword id="KW-0349">Heme</keyword>
<keyword id="KW-0408">Iron</keyword>
<keyword id="KW-0472">Membrane</keyword>
<keyword id="KW-0479">Metal-binding</keyword>
<keyword id="KW-0602">Photosynthesis</keyword>
<keyword id="KW-0934">Plastid</keyword>
<keyword id="KW-0732">Signal</keyword>
<keyword id="KW-0793">Thylakoid</keyword>
<keyword id="KW-0812">Transmembrane</keyword>
<keyword id="KW-1133">Transmembrane helix</keyword>
<keyword id="KW-0813">Transport</keyword>
<organism>
    <name type="scientific">Cryptomeria japonica</name>
    <name type="common">Japanese cedar</name>
    <name type="synonym">Cupressus japonica</name>
    <dbReference type="NCBI Taxonomy" id="3369"/>
    <lineage>
        <taxon>Eukaryota</taxon>
        <taxon>Viridiplantae</taxon>
        <taxon>Streptophyta</taxon>
        <taxon>Embryophyta</taxon>
        <taxon>Tracheophyta</taxon>
        <taxon>Spermatophyta</taxon>
        <taxon>Pinopsida</taxon>
        <taxon>Pinidae</taxon>
        <taxon>Conifers II</taxon>
        <taxon>Cupressales</taxon>
        <taxon>Cupressaceae</taxon>
        <taxon>Cryptomeria</taxon>
    </lineage>
</organism>
<sequence length="321" mass="35728">MQNRKTYDDWVKKWITQSISVLIMIDIMTRTSIANAYPIFAQQAYENPREATGRIVCANCHLAKKPVEIEVPQSVLPDTVFEAVVKIPYDKQIKQVLANGKKGTLNVGAVLILPEGFELAPPDRIYPEIKEKIGDLYFQNYRPNQKNILIIGPVPGQKYSEIVFPILSPNPATNKAAHFLKYPIYVGGNRGRGQIYPDGSKSNNTVYNASATGKVSKIVRKEKGGYQITIDNPSDGRQVVDFVPPGPELLVSEGEFIKADQSLTNNPNVGGFGQENAEIVLQDPLRVQGLLLFLASVVLAQIFLVLKKKQFEKVQLVEMNF</sequence>
<evidence type="ECO:0000250" key="1"/>
<evidence type="ECO:0000255" key="2">
    <source>
        <dbReference type="HAMAP-Rule" id="MF_00610"/>
    </source>
</evidence>
<reference key="1">
    <citation type="journal article" date="2008" name="BMC Plant Biol.">
        <title>Complete nucleotide sequence of the Cryptomeria japonica D. Don. chloroplast genome and comparative chloroplast genomics: diversified genomic structure of coniferous species.</title>
        <authorList>
            <person name="Hirao T."/>
            <person name="Watanabe A."/>
            <person name="Kurita M."/>
            <person name="Kondo T."/>
            <person name="Takata K."/>
        </authorList>
    </citation>
    <scope>NUCLEOTIDE SEQUENCE [LARGE SCALE GENOMIC DNA]</scope>
</reference>
<protein>
    <recommendedName>
        <fullName evidence="2">Cytochrome f</fullName>
    </recommendedName>
</protein>
<feature type="signal peptide" evidence="2">
    <location>
        <begin position="1"/>
        <end position="35"/>
    </location>
</feature>
<feature type="chain" id="PRO_0000342056" description="Cytochrome f">
    <location>
        <begin position="36"/>
        <end position="321"/>
    </location>
</feature>
<feature type="transmembrane region" description="Helical" evidence="2">
    <location>
        <begin position="287"/>
        <end position="307"/>
    </location>
</feature>
<feature type="binding site" description="axial binding residue" evidence="2">
    <location>
        <position position="37"/>
    </location>
    <ligand>
        <name>heme</name>
        <dbReference type="ChEBI" id="CHEBI:30413"/>
    </ligand>
    <ligandPart>
        <name>Fe</name>
        <dbReference type="ChEBI" id="CHEBI:18248"/>
    </ligandPart>
</feature>
<feature type="binding site" description="covalent" evidence="2">
    <location>
        <position position="57"/>
    </location>
    <ligand>
        <name>heme</name>
        <dbReference type="ChEBI" id="CHEBI:30413"/>
    </ligand>
</feature>
<feature type="binding site" description="covalent" evidence="2">
    <location>
        <position position="60"/>
    </location>
    <ligand>
        <name>heme</name>
        <dbReference type="ChEBI" id="CHEBI:30413"/>
    </ligand>
</feature>
<feature type="binding site" description="axial binding residue" evidence="2">
    <location>
        <position position="61"/>
    </location>
    <ligand>
        <name>heme</name>
        <dbReference type="ChEBI" id="CHEBI:30413"/>
    </ligand>
    <ligandPart>
        <name>Fe</name>
        <dbReference type="ChEBI" id="CHEBI:18248"/>
    </ligandPart>
</feature>